<gene>
    <name evidence="1" type="primary">smg</name>
    <name type="ORF">GD12947</name>
</gene>
<accession>B4QMP1</accession>
<protein>
    <recommendedName>
        <fullName evidence="1">Protein Smaug</fullName>
    </recommendedName>
</protein>
<reference evidence="4" key="1">
    <citation type="journal article" date="2007" name="Nature">
        <title>Evolution of genes and genomes on the Drosophila phylogeny.</title>
        <authorList>
            <consortium name="Drosophila 12 genomes consortium"/>
        </authorList>
    </citation>
    <scope>NUCLEOTIDE SEQUENCE [LARGE SCALE GENOMIC DNA]</scope>
</reference>
<organism>
    <name type="scientific">Drosophila simulans</name>
    <name type="common">Fruit fly</name>
    <dbReference type="NCBI Taxonomy" id="7240"/>
    <lineage>
        <taxon>Eukaryota</taxon>
        <taxon>Metazoa</taxon>
        <taxon>Ecdysozoa</taxon>
        <taxon>Arthropoda</taxon>
        <taxon>Hexapoda</taxon>
        <taxon>Insecta</taxon>
        <taxon>Pterygota</taxon>
        <taxon>Neoptera</taxon>
        <taxon>Endopterygota</taxon>
        <taxon>Diptera</taxon>
        <taxon>Brachycera</taxon>
        <taxon>Muscomorpha</taxon>
        <taxon>Ephydroidea</taxon>
        <taxon>Drosophilidae</taxon>
        <taxon>Drosophila</taxon>
        <taxon>Sophophora</taxon>
    </lineage>
</organism>
<evidence type="ECO:0000250" key="1">
    <source>
        <dbReference type="UniProtKB" id="Q23972"/>
    </source>
</evidence>
<evidence type="ECO:0000255" key="2"/>
<evidence type="ECO:0000256" key="3">
    <source>
        <dbReference type="SAM" id="MobiDB-lite"/>
    </source>
</evidence>
<evidence type="ECO:0000312" key="4">
    <source>
        <dbReference type="EMBL" id="EDX09795.1"/>
    </source>
</evidence>
<sequence length="998" mass="108866">MKYATGTDNAMTSGISGQTNNSNSASNEMQPTTSTPTAVHKEATSTATTTATYANGNPNPSANPSQSQPSNALFCEQVTTVTNLFEKWNDCERTVVMYALLKRLRYPSLKFLQYSIDSNLTQNLGTSQTNLSSVVIDINANNPVYLQNLLNAYKTFQPCDLLDAMSSSSSDKDSMPCYGSDFQITTSAQCDERKLYARKEDILHEVLNMLPLLKPGNEEAKLIYLTLIPVAVKDTMQQIVPTELVQQIFSYLLIHPAITSEDRRSLNIWLRHLEDHIQAAAAGLTNRSYFLQPSPQLVAGGSSTGSGSCSSSATSSSTASCSSVASSSLCPASGSRSSRTNDWQTIAPPSKQLQNKLAGDWRGSGGGSSSGSINPLCDNLNGITLNELASSQNSLGLSLEGSSSLVNGVVAGAGSMLGIGGGDDHDTSFSKNGTEILDFDPVTADMGEACSLASSSLCGRNGGNTVEDRSQPPPNLQQQLLQPPPYASILMGNVGDQFGEINRWSLDSKIAALKTRRSNSLTTQTISSCSSSSNSSVITVNDNCSNSTENLAQFANKPRSFSLSIEHQRGALMNSGSDTRLDEFKPNYIKFHTRNVGMSGIGLWLKSLRLHKYIELFKNMTYEEMLLITEDFLQSVGVTKGASHKLALCIDKLKERANILNRVEQELLTGQMELSTAVEELTNIVLTPMKPLESPGPPEENIGLRFLKVIDIVTNTLQQDPYAVQDDETLGVLMWILDRSIHNEAFMNHASQLKDLKFKLSKMKISMVPKMHHVKPAGVGPNNGNINKPRWNGKTRKCDTKSGSNDRINNRKNSNDMLNFSLNCLPHPLPHHSQQAPPPLPQFDYNGYGGGPSHQPQYKSSSYPSFMGNPQQQPPPPPSSKSHHHPQQMQQMLQQHNHFPALPQQTPPQSHRRSLNNLILVAGGPQQPQQLIFKPGQGVLTNNGSNDNLGLERNQQPQQQQQRKLSGGVSSAEQQPKKTMAAVVMENLAKFDQHFTLF</sequence>
<comment type="function">
    <text evidence="1">Translation regulator that binds to the 3'-UTR of specific mRNAs such as nanos (nos) and prevent their translation. Prevents translation of unlocalized nos in the bulk cytoplasm via the recruitment of cup (By similarity).</text>
</comment>
<comment type="subunit">
    <text evidence="1">Interacts with oskar (osk). Binds to the 3'-UTR of nos. Interacts with cup, which in turn recruits eIF4-E, leading to an indirect interaction between smg and eIF4-E that prevents mRNA translation (By similarity).</text>
</comment>
<comment type="subcellular location">
    <subcellularLocation>
        <location evidence="1">Cytoplasm</location>
    </subcellularLocation>
</comment>
<comment type="domain">
    <text evidence="1">The SAM domain mediates the association with the 3'-UTR of specific mRNAs.</text>
</comment>
<comment type="similarity">
    <text evidence="2">Belongs to the SMAUG family.</text>
</comment>
<proteinExistence type="inferred from homology"/>
<name>SMG_DROSI</name>
<dbReference type="EMBL" id="CM000363">
    <property type="protein sequence ID" value="EDX09795.1"/>
    <property type="molecule type" value="Genomic_DNA"/>
</dbReference>
<dbReference type="SMR" id="B4QMP1"/>
<dbReference type="STRING" id="7240.B4QMP1"/>
<dbReference type="EnsemblMetazoa" id="FBtr0212857">
    <property type="protein sequence ID" value="FBpp0211349"/>
    <property type="gene ID" value="FBgn0184671"/>
</dbReference>
<dbReference type="EnsemblMetazoa" id="XM_016169900.3">
    <property type="protein sequence ID" value="XP_016031110.1"/>
    <property type="gene ID" value="LOC6737372"/>
</dbReference>
<dbReference type="GeneID" id="6737372"/>
<dbReference type="CTD" id="39034"/>
<dbReference type="HOGENOM" id="CLU_003304_0_0_1"/>
<dbReference type="OMA" id="HHSQHAQ"/>
<dbReference type="OrthoDB" id="2155283at2759"/>
<dbReference type="PhylomeDB" id="B4QMP1"/>
<dbReference type="ChiTaRS" id="smg">
    <property type="organism name" value="fly"/>
</dbReference>
<dbReference type="Proteomes" id="UP000000304">
    <property type="component" value="Chromosome 3L"/>
</dbReference>
<dbReference type="Bgee" id="FBgn0184671">
    <property type="expression patterns" value="Expressed in embryo and 3 other cell types or tissues"/>
</dbReference>
<dbReference type="GO" id="GO:0005737">
    <property type="term" value="C:cytoplasm"/>
    <property type="evidence" value="ECO:0000250"/>
    <property type="project" value="UniProtKB"/>
</dbReference>
<dbReference type="GO" id="GO:0000932">
    <property type="term" value="C:P-body"/>
    <property type="evidence" value="ECO:0007669"/>
    <property type="project" value="TreeGrafter"/>
</dbReference>
<dbReference type="GO" id="GO:0003729">
    <property type="term" value="F:mRNA binding"/>
    <property type="evidence" value="ECO:0007669"/>
    <property type="project" value="TreeGrafter"/>
</dbReference>
<dbReference type="GO" id="GO:0030371">
    <property type="term" value="F:translation repressor activity"/>
    <property type="evidence" value="ECO:0000250"/>
    <property type="project" value="UniProtKB"/>
</dbReference>
<dbReference type="GO" id="GO:0017148">
    <property type="term" value="P:negative regulation of translation"/>
    <property type="evidence" value="ECO:0000250"/>
    <property type="project" value="UniProtKB"/>
</dbReference>
<dbReference type="GO" id="GO:0000289">
    <property type="term" value="P:nuclear-transcribed mRNA poly(A) tail shortening"/>
    <property type="evidence" value="ECO:0007669"/>
    <property type="project" value="TreeGrafter"/>
</dbReference>
<dbReference type="GO" id="GO:0006355">
    <property type="term" value="P:regulation of DNA-templated transcription"/>
    <property type="evidence" value="ECO:0007669"/>
    <property type="project" value="InterPro"/>
</dbReference>
<dbReference type="CDD" id="cd09557">
    <property type="entry name" value="SAM_Smaug"/>
    <property type="match status" value="1"/>
</dbReference>
<dbReference type="FunFam" id="1.10.150.50:FF:000076">
    <property type="entry name" value="Smg, isoform B"/>
    <property type="match status" value="1"/>
</dbReference>
<dbReference type="FunFam" id="1.25.40.170:FF:000005">
    <property type="entry name" value="Smg, isoform B"/>
    <property type="match status" value="1"/>
</dbReference>
<dbReference type="Gene3D" id="1.25.40.170">
    <property type="entry name" value="Smaug, PHAT domain"/>
    <property type="match status" value="1"/>
</dbReference>
<dbReference type="Gene3D" id="1.10.150.50">
    <property type="entry name" value="Transcription Factor, Ets-1"/>
    <property type="match status" value="1"/>
</dbReference>
<dbReference type="InterPro" id="IPR016024">
    <property type="entry name" value="ARM-type_fold"/>
</dbReference>
<dbReference type="InterPro" id="IPR015327">
    <property type="entry name" value="PHAT_dom"/>
</dbReference>
<dbReference type="InterPro" id="IPR037093">
    <property type="entry name" value="PHAT_dom_sf"/>
</dbReference>
<dbReference type="InterPro" id="IPR001660">
    <property type="entry name" value="SAM"/>
</dbReference>
<dbReference type="InterPro" id="IPR013761">
    <property type="entry name" value="SAM/pointed_sf"/>
</dbReference>
<dbReference type="InterPro" id="IPR050897">
    <property type="entry name" value="SMAUG/VTS1_RNA-bind"/>
</dbReference>
<dbReference type="InterPro" id="IPR037634">
    <property type="entry name" value="Smaug_SAM"/>
</dbReference>
<dbReference type="PANTHER" id="PTHR12515:SF5">
    <property type="entry name" value="PROTEIN SMAUG"/>
    <property type="match status" value="1"/>
</dbReference>
<dbReference type="PANTHER" id="PTHR12515">
    <property type="entry name" value="STERILE ALPHA MOTIF DOMAIN CONTAINING PROTEIN 4-RELATED"/>
    <property type="match status" value="1"/>
</dbReference>
<dbReference type="Pfam" id="PF09246">
    <property type="entry name" value="PHAT"/>
    <property type="match status" value="1"/>
</dbReference>
<dbReference type="Pfam" id="PF00536">
    <property type="entry name" value="SAM_1"/>
    <property type="match status" value="1"/>
</dbReference>
<dbReference type="SMART" id="SM00454">
    <property type="entry name" value="SAM"/>
    <property type="match status" value="1"/>
</dbReference>
<dbReference type="SUPFAM" id="SSF48371">
    <property type="entry name" value="ARM repeat"/>
    <property type="match status" value="1"/>
</dbReference>
<dbReference type="SUPFAM" id="SSF47769">
    <property type="entry name" value="SAM/Pointed domain"/>
    <property type="match status" value="1"/>
</dbReference>
<feature type="chain" id="PRO_0000395318" description="Protein Smaug">
    <location>
        <begin position="1"/>
        <end position="998"/>
    </location>
</feature>
<feature type="domain" description="SAM" evidence="2">
    <location>
        <begin position="600"/>
        <end position="654"/>
    </location>
</feature>
<feature type="region of interest" description="Disordered" evidence="3">
    <location>
        <begin position="1"/>
        <end position="45"/>
    </location>
</feature>
<feature type="region of interest" description="Disordered" evidence="3">
    <location>
        <begin position="50"/>
        <end position="69"/>
    </location>
</feature>
<feature type="region of interest" description="Disordered" evidence="3">
    <location>
        <begin position="329"/>
        <end position="370"/>
    </location>
</feature>
<feature type="region of interest" description="Interaction with cup" evidence="1">
    <location>
        <begin position="583"/>
        <end position="763"/>
    </location>
</feature>
<feature type="region of interest" description="Disordered" evidence="3">
    <location>
        <begin position="773"/>
        <end position="892"/>
    </location>
</feature>
<feature type="region of interest" description="Disordered" evidence="3">
    <location>
        <begin position="942"/>
        <end position="977"/>
    </location>
</feature>
<feature type="compositionally biased region" description="Polar residues" evidence="3">
    <location>
        <begin position="1"/>
        <end position="37"/>
    </location>
</feature>
<feature type="compositionally biased region" description="Low complexity" evidence="3">
    <location>
        <begin position="329"/>
        <end position="338"/>
    </location>
</feature>
<feature type="compositionally biased region" description="Polar residues" evidence="3">
    <location>
        <begin position="801"/>
        <end position="822"/>
    </location>
</feature>
<feature type="compositionally biased region" description="Polar residues" evidence="3">
    <location>
        <begin position="854"/>
        <end position="864"/>
    </location>
</feature>
<feature type="modified residue" description="Phosphoserine" evidence="1">
    <location>
        <position position="564"/>
    </location>
</feature>
<feature type="modified residue" description="Phosphoserine" evidence="1">
    <location>
        <position position="575"/>
    </location>
</feature>
<feature type="modified residue" description="Phosphoserine" evidence="1">
    <location>
        <position position="971"/>
    </location>
</feature>
<keyword id="KW-0963">Cytoplasm</keyword>
<keyword id="KW-0217">Developmental protein</keyword>
<keyword id="KW-0597">Phosphoprotein</keyword>
<keyword id="KW-1185">Reference proteome</keyword>
<keyword id="KW-0678">Repressor</keyword>
<keyword id="KW-0694">RNA-binding</keyword>
<keyword id="KW-0810">Translation regulation</keyword>